<comment type="catalytic activity">
    <reaction>
        <text>L-histidinol phosphate + 2-oxoglutarate = 3-(imidazol-4-yl)-2-oxopropyl phosphate + L-glutamate</text>
        <dbReference type="Rhea" id="RHEA:23744"/>
        <dbReference type="ChEBI" id="CHEBI:16810"/>
        <dbReference type="ChEBI" id="CHEBI:29985"/>
        <dbReference type="ChEBI" id="CHEBI:57766"/>
        <dbReference type="ChEBI" id="CHEBI:57980"/>
        <dbReference type="EC" id="2.6.1.9"/>
    </reaction>
</comment>
<comment type="cofactor">
    <cofactor evidence="1">
        <name>pyridoxal 5'-phosphate</name>
        <dbReference type="ChEBI" id="CHEBI:597326"/>
    </cofactor>
</comment>
<comment type="pathway">
    <text>Amino-acid biosynthesis; L-histidine biosynthesis; L-histidine from 5-phospho-alpha-D-ribose 1-diphosphate: step 7/9.</text>
</comment>
<comment type="subunit">
    <text evidence="1">Homodimer.</text>
</comment>
<comment type="similarity">
    <text evidence="2">Belongs to the class-II pyridoxal-phosphate-dependent aminotransferase family. Histidinol-phosphate aminotransferase subfamily.</text>
</comment>
<keyword id="KW-0028">Amino-acid biosynthesis</keyword>
<keyword id="KW-0032">Aminotransferase</keyword>
<keyword id="KW-0368">Histidine biosynthesis</keyword>
<keyword id="KW-0663">Pyridoxal phosphate</keyword>
<keyword id="KW-1185">Reference proteome</keyword>
<keyword id="KW-0808">Transferase</keyword>
<organism>
    <name type="scientific">Pasteurella multocida (strain Pm70)</name>
    <dbReference type="NCBI Taxonomy" id="272843"/>
    <lineage>
        <taxon>Bacteria</taxon>
        <taxon>Pseudomonadati</taxon>
        <taxon>Pseudomonadota</taxon>
        <taxon>Gammaproteobacteria</taxon>
        <taxon>Pasteurellales</taxon>
        <taxon>Pasteurellaceae</taxon>
        <taxon>Pasteurella</taxon>
    </lineage>
</organism>
<dbReference type="EC" id="2.6.1.9"/>
<dbReference type="EMBL" id="AE004439">
    <property type="protein sequence ID" value="AAK03283.1"/>
    <property type="molecule type" value="Genomic_DNA"/>
</dbReference>
<dbReference type="RefSeq" id="WP_010907066.1">
    <property type="nucleotide sequence ID" value="NC_002663.1"/>
</dbReference>
<dbReference type="SMR" id="Q9CLM3"/>
<dbReference type="STRING" id="272843.PM1199"/>
<dbReference type="EnsemblBacteria" id="AAK03283">
    <property type="protein sequence ID" value="AAK03283"/>
    <property type="gene ID" value="PM1199"/>
</dbReference>
<dbReference type="KEGG" id="pmu:PM1199"/>
<dbReference type="PATRIC" id="fig|272843.6.peg.1210"/>
<dbReference type="HOGENOM" id="CLU_017584_3_1_6"/>
<dbReference type="OrthoDB" id="9813612at2"/>
<dbReference type="UniPathway" id="UPA00031">
    <property type="reaction ID" value="UER00012"/>
</dbReference>
<dbReference type="Proteomes" id="UP000000809">
    <property type="component" value="Chromosome"/>
</dbReference>
<dbReference type="GO" id="GO:0004400">
    <property type="term" value="F:histidinol-phosphate transaminase activity"/>
    <property type="evidence" value="ECO:0007669"/>
    <property type="project" value="UniProtKB-UniRule"/>
</dbReference>
<dbReference type="GO" id="GO:0030170">
    <property type="term" value="F:pyridoxal phosphate binding"/>
    <property type="evidence" value="ECO:0007669"/>
    <property type="project" value="InterPro"/>
</dbReference>
<dbReference type="GO" id="GO:0000105">
    <property type="term" value="P:L-histidine biosynthetic process"/>
    <property type="evidence" value="ECO:0007669"/>
    <property type="project" value="UniProtKB-UniRule"/>
</dbReference>
<dbReference type="CDD" id="cd00609">
    <property type="entry name" value="AAT_like"/>
    <property type="match status" value="1"/>
</dbReference>
<dbReference type="Gene3D" id="3.90.1150.10">
    <property type="entry name" value="Aspartate Aminotransferase, domain 1"/>
    <property type="match status" value="1"/>
</dbReference>
<dbReference type="Gene3D" id="3.40.640.10">
    <property type="entry name" value="Type I PLP-dependent aspartate aminotransferase-like (Major domain)"/>
    <property type="match status" value="1"/>
</dbReference>
<dbReference type="HAMAP" id="MF_01023">
    <property type="entry name" value="HisC_aminotrans_2"/>
    <property type="match status" value="1"/>
</dbReference>
<dbReference type="InterPro" id="IPR001917">
    <property type="entry name" value="Aminotrans_II_pyridoxalP_BS"/>
</dbReference>
<dbReference type="InterPro" id="IPR004839">
    <property type="entry name" value="Aminotransferase_I/II_large"/>
</dbReference>
<dbReference type="InterPro" id="IPR005861">
    <property type="entry name" value="HisP_aminotrans"/>
</dbReference>
<dbReference type="InterPro" id="IPR015424">
    <property type="entry name" value="PyrdxlP-dep_Trfase"/>
</dbReference>
<dbReference type="InterPro" id="IPR015421">
    <property type="entry name" value="PyrdxlP-dep_Trfase_major"/>
</dbReference>
<dbReference type="InterPro" id="IPR015422">
    <property type="entry name" value="PyrdxlP-dep_Trfase_small"/>
</dbReference>
<dbReference type="NCBIfam" id="TIGR01141">
    <property type="entry name" value="hisC"/>
    <property type="match status" value="1"/>
</dbReference>
<dbReference type="PANTHER" id="PTHR42885:SF2">
    <property type="entry name" value="HISTIDINOL-PHOSPHATE AMINOTRANSFERASE"/>
    <property type="match status" value="1"/>
</dbReference>
<dbReference type="PANTHER" id="PTHR42885">
    <property type="entry name" value="HISTIDINOL-PHOSPHATE AMINOTRANSFERASE-RELATED"/>
    <property type="match status" value="1"/>
</dbReference>
<dbReference type="Pfam" id="PF00155">
    <property type="entry name" value="Aminotran_1_2"/>
    <property type="match status" value="1"/>
</dbReference>
<dbReference type="SUPFAM" id="SSF53383">
    <property type="entry name" value="PLP-dependent transferases"/>
    <property type="match status" value="1"/>
</dbReference>
<dbReference type="PROSITE" id="PS00599">
    <property type="entry name" value="AA_TRANSFER_CLASS_2"/>
    <property type="match status" value="1"/>
</dbReference>
<sequence length="351" mass="38981">MSISSLSRKNIQALTPYQSARRLGGKGDIWLNANEYPTSPDFNLTHRTFNRYPEPQPQAVIEGYANYVGVTPENVLVSRGGDESIELIIRAFCEAEDSILYCPPTYGMYAVSAETCGIALKTVPLTADFQLNLPEIERQLTGVKVVFVCSPNNPTGTLVNRTDLLALLEMTRNKAIVVVDEAYIEFCPQATMVTELKNYPHLAIIRTLSKAFALAGLRCGFTLANKDLIEVLQKVIAPYPLPVPVADLAAQALQPAGLQAMQQRVQEILQNRTALEADLRSLPCVENVFQSDGNYLLVKFKDGQKIFKTLWDQGIILRNQHSALMLENCIRITIGTAEENRRVIEAIRKIA</sequence>
<evidence type="ECO:0000250" key="1"/>
<evidence type="ECO:0000305" key="2"/>
<gene>
    <name type="primary">hisC1</name>
    <name type="synonym">hisC</name>
    <name type="ordered locus">PM1199</name>
</gene>
<protein>
    <recommendedName>
        <fullName>Histidinol-phosphate aminotransferase 1</fullName>
        <ecNumber>2.6.1.9</ecNumber>
    </recommendedName>
    <alternativeName>
        <fullName>Imidazole acetol-phosphate transaminase 1</fullName>
    </alternativeName>
</protein>
<reference key="1">
    <citation type="journal article" date="2001" name="Proc. Natl. Acad. Sci. U.S.A.">
        <title>Complete genomic sequence of Pasteurella multocida Pm70.</title>
        <authorList>
            <person name="May B.J."/>
            <person name="Zhang Q."/>
            <person name="Li L.L."/>
            <person name="Paustian M.L."/>
            <person name="Whittam T.S."/>
            <person name="Kapur V."/>
        </authorList>
    </citation>
    <scope>NUCLEOTIDE SEQUENCE [LARGE SCALE GENOMIC DNA]</scope>
    <source>
        <strain>Pm70</strain>
    </source>
</reference>
<name>HIS81_PASMU</name>
<accession>Q9CLM3</accession>
<proteinExistence type="inferred from homology"/>
<feature type="chain" id="PRO_0000153410" description="Histidinol-phosphate aminotransferase 1">
    <location>
        <begin position="1"/>
        <end position="351"/>
    </location>
</feature>
<feature type="modified residue" description="N6-(pyridoxal phosphate)lysine" evidence="1">
    <location>
        <position position="210"/>
    </location>
</feature>